<feature type="chain" id="PRO_0000190885" description="Probable endonuclease 4">
    <location>
        <begin position="1"/>
        <end position="295"/>
    </location>
</feature>
<feature type="binding site" evidence="1">
    <location>
        <position position="78"/>
    </location>
    <ligand>
        <name>Zn(2+)</name>
        <dbReference type="ChEBI" id="CHEBI:29105"/>
        <label>1</label>
    </ligand>
</feature>
<feature type="binding site" evidence="1">
    <location>
        <position position="118"/>
    </location>
    <ligand>
        <name>Zn(2+)</name>
        <dbReference type="ChEBI" id="CHEBI:29105"/>
        <label>1</label>
    </ligand>
</feature>
<feature type="binding site" evidence="1">
    <location>
        <position position="154"/>
    </location>
    <ligand>
        <name>Zn(2+)</name>
        <dbReference type="ChEBI" id="CHEBI:29105"/>
        <label>1</label>
    </ligand>
</feature>
<feature type="binding site" evidence="1">
    <location>
        <position position="154"/>
    </location>
    <ligand>
        <name>Zn(2+)</name>
        <dbReference type="ChEBI" id="CHEBI:29105"/>
        <label>2</label>
    </ligand>
</feature>
<feature type="binding site" evidence="1">
    <location>
        <position position="188"/>
    </location>
    <ligand>
        <name>Zn(2+)</name>
        <dbReference type="ChEBI" id="CHEBI:29105"/>
        <label>2</label>
    </ligand>
</feature>
<feature type="binding site" evidence="1">
    <location>
        <position position="191"/>
    </location>
    <ligand>
        <name>Zn(2+)</name>
        <dbReference type="ChEBI" id="CHEBI:29105"/>
        <label>3</label>
    </ligand>
</feature>
<feature type="binding site" evidence="1">
    <location>
        <position position="225"/>
    </location>
    <ligand>
        <name>Zn(2+)</name>
        <dbReference type="ChEBI" id="CHEBI:29105"/>
        <label>2</label>
    </ligand>
</feature>
<feature type="binding site" evidence="1">
    <location>
        <position position="238"/>
    </location>
    <ligand>
        <name>Zn(2+)</name>
        <dbReference type="ChEBI" id="CHEBI:29105"/>
        <label>3</label>
    </ligand>
</feature>
<feature type="binding site" evidence="1">
    <location>
        <position position="240"/>
    </location>
    <ligand>
        <name>Zn(2+)</name>
        <dbReference type="ChEBI" id="CHEBI:29105"/>
        <label>3</label>
    </ligand>
</feature>
<feature type="binding site" evidence="1">
    <location>
        <position position="270"/>
    </location>
    <ligand>
        <name>Zn(2+)</name>
        <dbReference type="ChEBI" id="CHEBI:29105"/>
        <label>2</label>
    </ligand>
</feature>
<dbReference type="EC" id="3.1.21.2" evidence="1"/>
<dbReference type="EMBL" id="BA000031">
    <property type="protein sequence ID" value="BAC58761.1"/>
    <property type="molecule type" value="Genomic_DNA"/>
</dbReference>
<dbReference type="RefSeq" id="NP_796877.1">
    <property type="nucleotide sequence ID" value="NC_004603.1"/>
</dbReference>
<dbReference type="RefSeq" id="WP_005479588.1">
    <property type="nucleotide sequence ID" value="NC_004603.1"/>
</dbReference>
<dbReference type="SMR" id="Q87SC6"/>
<dbReference type="GeneID" id="1187966"/>
<dbReference type="KEGG" id="vpa:VP0498"/>
<dbReference type="PATRIC" id="fig|223926.6.peg.475"/>
<dbReference type="eggNOG" id="COG0648">
    <property type="taxonomic scope" value="Bacteria"/>
</dbReference>
<dbReference type="HOGENOM" id="CLU_025885_0_4_6"/>
<dbReference type="Proteomes" id="UP000002493">
    <property type="component" value="Chromosome 1"/>
</dbReference>
<dbReference type="GO" id="GO:0008833">
    <property type="term" value="F:deoxyribonuclease IV (phage-T4-induced) activity"/>
    <property type="evidence" value="ECO:0007669"/>
    <property type="project" value="UniProtKB-UniRule"/>
</dbReference>
<dbReference type="GO" id="GO:0003677">
    <property type="term" value="F:DNA binding"/>
    <property type="evidence" value="ECO:0007669"/>
    <property type="project" value="InterPro"/>
</dbReference>
<dbReference type="GO" id="GO:0003906">
    <property type="term" value="F:DNA-(apurinic or apyrimidinic site) endonuclease activity"/>
    <property type="evidence" value="ECO:0007669"/>
    <property type="project" value="TreeGrafter"/>
</dbReference>
<dbReference type="GO" id="GO:0008081">
    <property type="term" value="F:phosphoric diester hydrolase activity"/>
    <property type="evidence" value="ECO:0007669"/>
    <property type="project" value="TreeGrafter"/>
</dbReference>
<dbReference type="GO" id="GO:0008270">
    <property type="term" value="F:zinc ion binding"/>
    <property type="evidence" value="ECO:0007669"/>
    <property type="project" value="UniProtKB-UniRule"/>
</dbReference>
<dbReference type="GO" id="GO:0006284">
    <property type="term" value="P:base-excision repair"/>
    <property type="evidence" value="ECO:0007669"/>
    <property type="project" value="TreeGrafter"/>
</dbReference>
<dbReference type="CDD" id="cd00019">
    <property type="entry name" value="AP2Ec"/>
    <property type="match status" value="1"/>
</dbReference>
<dbReference type="FunFam" id="3.20.20.150:FF:000001">
    <property type="entry name" value="Probable endonuclease 4"/>
    <property type="match status" value="1"/>
</dbReference>
<dbReference type="Gene3D" id="3.20.20.150">
    <property type="entry name" value="Divalent-metal-dependent TIM barrel enzymes"/>
    <property type="match status" value="1"/>
</dbReference>
<dbReference type="HAMAP" id="MF_00152">
    <property type="entry name" value="Nfo"/>
    <property type="match status" value="1"/>
</dbReference>
<dbReference type="InterPro" id="IPR001719">
    <property type="entry name" value="AP_endonuc_2"/>
</dbReference>
<dbReference type="InterPro" id="IPR018246">
    <property type="entry name" value="AP_endonuc_F2_Zn_BS"/>
</dbReference>
<dbReference type="InterPro" id="IPR036237">
    <property type="entry name" value="Xyl_isomerase-like_sf"/>
</dbReference>
<dbReference type="InterPro" id="IPR013022">
    <property type="entry name" value="Xyl_isomerase-like_TIM-brl"/>
</dbReference>
<dbReference type="NCBIfam" id="TIGR00587">
    <property type="entry name" value="nfo"/>
    <property type="match status" value="1"/>
</dbReference>
<dbReference type="NCBIfam" id="NF002199">
    <property type="entry name" value="PRK01060.1-4"/>
    <property type="match status" value="1"/>
</dbReference>
<dbReference type="PANTHER" id="PTHR21445:SF0">
    <property type="entry name" value="APURINIC-APYRIMIDINIC ENDONUCLEASE"/>
    <property type="match status" value="1"/>
</dbReference>
<dbReference type="PANTHER" id="PTHR21445">
    <property type="entry name" value="ENDONUCLEASE IV ENDODEOXYRIBONUCLEASE IV"/>
    <property type="match status" value="1"/>
</dbReference>
<dbReference type="Pfam" id="PF01261">
    <property type="entry name" value="AP_endonuc_2"/>
    <property type="match status" value="1"/>
</dbReference>
<dbReference type="SMART" id="SM00518">
    <property type="entry name" value="AP2Ec"/>
    <property type="match status" value="1"/>
</dbReference>
<dbReference type="SUPFAM" id="SSF51658">
    <property type="entry name" value="Xylose isomerase-like"/>
    <property type="match status" value="1"/>
</dbReference>
<dbReference type="PROSITE" id="PS00729">
    <property type="entry name" value="AP_NUCLEASE_F2_1"/>
    <property type="match status" value="1"/>
</dbReference>
<dbReference type="PROSITE" id="PS00730">
    <property type="entry name" value="AP_NUCLEASE_F2_2"/>
    <property type="match status" value="1"/>
</dbReference>
<dbReference type="PROSITE" id="PS00731">
    <property type="entry name" value="AP_NUCLEASE_F2_3"/>
    <property type="match status" value="1"/>
</dbReference>
<dbReference type="PROSITE" id="PS51432">
    <property type="entry name" value="AP_NUCLEASE_F2_4"/>
    <property type="match status" value="1"/>
</dbReference>
<accession>Q87SC6</accession>
<reference key="1">
    <citation type="journal article" date="2003" name="Lancet">
        <title>Genome sequence of Vibrio parahaemolyticus: a pathogenic mechanism distinct from that of V. cholerae.</title>
        <authorList>
            <person name="Makino K."/>
            <person name="Oshima K."/>
            <person name="Kurokawa K."/>
            <person name="Yokoyama K."/>
            <person name="Uda T."/>
            <person name="Tagomori K."/>
            <person name="Iijima Y."/>
            <person name="Najima M."/>
            <person name="Nakano M."/>
            <person name="Yamashita A."/>
            <person name="Kubota Y."/>
            <person name="Kimura S."/>
            <person name="Yasunaga T."/>
            <person name="Honda T."/>
            <person name="Shinagawa H."/>
            <person name="Hattori M."/>
            <person name="Iida T."/>
        </authorList>
    </citation>
    <scope>NUCLEOTIDE SEQUENCE [LARGE SCALE GENOMIC DNA]</scope>
    <source>
        <strain>RIMD 2210633</strain>
    </source>
</reference>
<protein>
    <recommendedName>
        <fullName evidence="1">Probable endonuclease 4</fullName>
        <ecNumber evidence="1">3.1.21.2</ecNumber>
    </recommendedName>
    <alternativeName>
        <fullName evidence="1">Endodeoxyribonuclease IV</fullName>
    </alternativeName>
    <alternativeName>
        <fullName evidence="1">Endonuclease IV</fullName>
    </alternativeName>
</protein>
<gene>
    <name evidence="1" type="primary">nfo</name>
    <name type="ordered locus">VP0498</name>
</gene>
<proteinExistence type="inferred from homology"/>
<name>END4_VIBPA</name>
<evidence type="ECO:0000255" key="1">
    <source>
        <dbReference type="HAMAP-Rule" id="MF_00152"/>
    </source>
</evidence>
<comment type="function">
    <text evidence="1">Endonuclease IV plays a role in DNA repair. It cleaves phosphodiester bonds at apurinic or apyrimidinic (AP) sites, generating a 3'-hydroxyl group and a 5'-terminal sugar phosphate.</text>
</comment>
<comment type="catalytic activity">
    <reaction evidence="1">
        <text>Endonucleolytic cleavage to 5'-phosphooligonucleotide end-products.</text>
        <dbReference type="EC" id="3.1.21.2"/>
    </reaction>
</comment>
<comment type="cofactor">
    <cofactor evidence="1">
        <name>Zn(2+)</name>
        <dbReference type="ChEBI" id="CHEBI:29105"/>
    </cofactor>
    <text evidence="1">Binds 3 Zn(2+) ions.</text>
</comment>
<comment type="similarity">
    <text evidence="1">Belongs to the AP endonuclease 2 family.</text>
</comment>
<sequence length="295" mass="33017">MTNMKNKFGNKLIGAHVSAAGGVDQAPLRAREIGANAFALFTKNQRQWVAKPLEAKTISAFKANCKMLGFGAEHILPHDSYLINLGAPEAEKLDKSRAAFIDEMERCNQLGLTLLNFHPGSHLKKVSEQECLATIAESINLAHKTVPDVVAVIENTAGQGTNLGWKFEHLAEIIEQVEDKDRVGVCIDTCHTFTAGYDLRTKEDCERTFAEFDRIVGMHYLRAMHLNDSKVEFASKVDRHHSLGKGEIGWDCFEYIAKDSRFDGIPLILETIDPDIWQQEINTLRQFHLAAINNQ</sequence>
<keyword id="KW-0227">DNA damage</keyword>
<keyword id="KW-0234">DNA repair</keyword>
<keyword id="KW-0255">Endonuclease</keyword>
<keyword id="KW-0378">Hydrolase</keyword>
<keyword id="KW-0479">Metal-binding</keyword>
<keyword id="KW-0540">Nuclease</keyword>
<keyword id="KW-0862">Zinc</keyword>
<organism>
    <name type="scientific">Vibrio parahaemolyticus serotype O3:K6 (strain RIMD 2210633)</name>
    <dbReference type="NCBI Taxonomy" id="223926"/>
    <lineage>
        <taxon>Bacteria</taxon>
        <taxon>Pseudomonadati</taxon>
        <taxon>Pseudomonadota</taxon>
        <taxon>Gammaproteobacteria</taxon>
        <taxon>Vibrionales</taxon>
        <taxon>Vibrionaceae</taxon>
        <taxon>Vibrio</taxon>
    </lineage>
</organism>